<evidence type="ECO:0000255" key="1"/>
<evidence type="ECO:0000269" key="2">
    <source>
    </source>
</evidence>
<evidence type="ECO:0000305" key="3"/>
<protein>
    <recommendedName>
        <fullName>Inositol phosphoceramide mannosyltransferase 2</fullName>
        <ecNumber>2.4.-.-</ecNumber>
    </recommendedName>
    <alternativeName>
        <fullName>IPC mannosyltransferase 2</fullName>
    </alternativeName>
</protein>
<organism>
    <name type="scientific">Schizosaccharomyces pombe (strain 972 / ATCC 24843)</name>
    <name type="common">Fission yeast</name>
    <dbReference type="NCBI Taxonomy" id="284812"/>
    <lineage>
        <taxon>Eukaryota</taxon>
        <taxon>Fungi</taxon>
        <taxon>Dikarya</taxon>
        <taxon>Ascomycota</taxon>
        <taxon>Taphrinomycotina</taxon>
        <taxon>Schizosaccharomycetes</taxon>
        <taxon>Schizosaccharomycetales</taxon>
        <taxon>Schizosaccharomycetaceae</taxon>
        <taxon>Schizosaccharomyces</taxon>
    </lineage>
</organism>
<comment type="function">
    <text evidence="2">With imt1 and imt3, is required for the synthesis of mannosyl phosphorylinositol ceramide (MIPC). Catalyzes the addition of mannosyl to phosphorylinositol ceramide (IPC). MIPC is essential for cell morphology, cell-surface distribution of ergosterol, localization for plasma-membrane transporters, and lipid-raft-mediated endocytosis of plasma membrane proteins to the vacuole.</text>
</comment>
<comment type="subcellular location">
    <subcellularLocation>
        <location>Golgi apparatus</location>
        <location>cis-Golgi network membrane</location>
        <topology>Multi-pass membrane protein</topology>
    </subcellularLocation>
    <subcellularLocation>
        <location>Golgi apparatus</location>
        <location>trans-Golgi network membrane</location>
        <topology>Multi-pass membrane protein</topology>
    </subcellularLocation>
</comment>
<comment type="similarity">
    <text evidence="3">Belongs to the glycosyltransferase 32 family.</text>
</comment>
<reference key="1">
    <citation type="journal article" date="2002" name="Nature">
        <title>The genome sequence of Schizosaccharomyces pombe.</title>
        <authorList>
            <person name="Wood V."/>
            <person name="Gwilliam R."/>
            <person name="Rajandream M.A."/>
            <person name="Lyne M.H."/>
            <person name="Lyne R."/>
            <person name="Stewart A."/>
            <person name="Sgouros J.G."/>
            <person name="Peat N."/>
            <person name="Hayles J."/>
            <person name="Baker S.G."/>
            <person name="Basham D."/>
            <person name="Bowman S."/>
            <person name="Brooks K."/>
            <person name="Brown D."/>
            <person name="Brown S."/>
            <person name="Chillingworth T."/>
            <person name="Churcher C.M."/>
            <person name="Collins M."/>
            <person name="Connor R."/>
            <person name="Cronin A."/>
            <person name="Davis P."/>
            <person name="Feltwell T."/>
            <person name="Fraser A."/>
            <person name="Gentles S."/>
            <person name="Goble A."/>
            <person name="Hamlin N."/>
            <person name="Harris D.E."/>
            <person name="Hidalgo J."/>
            <person name="Hodgson G."/>
            <person name="Holroyd S."/>
            <person name="Hornsby T."/>
            <person name="Howarth S."/>
            <person name="Huckle E.J."/>
            <person name="Hunt S."/>
            <person name="Jagels K."/>
            <person name="James K.D."/>
            <person name="Jones L."/>
            <person name="Jones M."/>
            <person name="Leather S."/>
            <person name="McDonald S."/>
            <person name="McLean J."/>
            <person name="Mooney P."/>
            <person name="Moule S."/>
            <person name="Mungall K.L."/>
            <person name="Murphy L.D."/>
            <person name="Niblett D."/>
            <person name="Odell C."/>
            <person name="Oliver K."/>
            <person name="O'Neil S."/>
            <person name="Pearson D."/>
            <person name="Quail M.A."/>
            <person name="Rabbinowitsch E."/>
            <person name="Rutherford K.M."/>
            <person name="Rutter S."/>
            <person name="Saunders D."/>
            <person name="Seeger K."/>
            <person name="Sharp S."/>
            <person name="Skelton J."/>
            <person name="Simmonds M.N."/>
            <person name="Squares R."/>
            <person name="Squares S."/>
            <person name="Stevens K."/>
            <person name="Taylor K."/>
            <person name="Taylor R.G."/>
            <person name="Tivey A."/>
            <person name="Walsh S.V."/>
            <person name="Warren T."/>
            <person name="Whitehead S."/>
            <person name="Woodward J.R."/>
            <person name="Volckaert G."/>
            <person name="Aert R."/>
            <person name="Robben J."/>
            <person name="Grymonprez B."/>
            <person name="Weltjens I."/>
            <person name="Vanstreels E."/>
            <person name="Rieger M."/>
            <person name="Schaefer M."/>
            <person name="Mueller-Auer S."/>
            <person name="Gabel C."/>
            <person name="Fuchs M."/>
            <person name="Duesterhoeft A."/>
            <person name="Fritzc C."/>
            <person name="Holzer E."/>
            <person name="Moestl D."/>
            <person name="Hilbert H."/>
            <person name="Borzym K."/>
            <person name="Langer I."/>
            <person name="Beck A."/>
            <person name="Lehrach H."/>
            <person name="Reinhardt R."/>
            <person name="Pohl T.M."/>
            <person name="Eger P."/>
            <person name="Zimmermann W."/>
            <person name="Wedler H."/>
            <person name="Wambutt R."/>
            <person name="Purnelle B."/>
            <person name="Goffeau A."/>
            <person name="Cadieu E."/>
            <person name="Dreano S."/>
            <person name="Gloux S."/>
            <person name="Lelaure V."/>
            <person name="Mottier S."/>
            <person name="Galibert F."/>
            <person name="Aves S.J."/>
            <person name="Xiang Z."/>
            <person name="Hunt C."/>
            <person name="Moore K."/>
            <person name="Hurst S.M."/>
            <person name="Lucas M."/>
            <person name="Rochet M."/>
            <person name="Gaillardin C."/>
            <person name="Tallada V.A."/>
            <person name="Garzon A."/>
            <person name="Thode G."/>
            <person name="Daga R.R."/>
            <person name="Cruzado L."/>
            <person name="Jimenez J."/>
            <person name="Sanchez M."/>
            <person name="del Rey F."/>
            <person name="Benito J."/>
            <person name="Dominguez A."/>
            <person name="Revuelta J.L."/>
            <person name="Moreno S."/>
            <person name="Armstrong J."/>
            <person name="Forsburg S.L."/>
            <person name="Cerutti L."/>
            <person name="Lowe T."/>
            <person name="McCombie W.R."/>
            <person name="Paulsen I."/>
            <person name="Potashkin J."/>
            <person name="Shpakovski G.V."/>
            <person name="Ussery D."/>
            <person name="Barrell B.G."/>
            <person name="Nurse P."/>
        </authorList>
    </citation>
    <scope>NUCLEOTIDE SEQUENCE [LARGE SCALE GENOMIC DNA]</scope>
    <source>
        <strain>972 / ATCC 24843</strain>
    </source>
</reference>
<reference key="2">
    <citation type="journal article" date="2006" name="Nat. Biotechnol.">
        <title>ORFeome cloning and global analysis of protein localization in the fission yeast Schizosaccharomyces pombe.</title>
        <authorList>
            <person name="Matsuyama A."/>
            <person name="Arai R."/>
            <person name="Yashiroda Y."/>
            <person name="Shirai A."/>
            <person name="Kamata A."/>
            <person name="Sekido S."/>
            <person name="Kobayashi Y."/>
            <person name="Hashimoto A."/>
            <person name="Hamamoto M."/>
            <person name="Hiraoka Y."/>
            <person name="Horinouchi S."/>
            <person name="Yoshida M."/>
        </authorList>
    </citation>
    <scope>SUBCELLULAR LOCATION [LARGE SCALE ANALYSIS]</scope>
</reference>
<reference key="3">
    <citation type="journal article" date="2010" name="J. Cell Sci.">
        <title>Mannosylinositol phosphorylceramide is a major sphingolipid component and is required for proper localization of plasma-membrane proteins in Schizosaccharomyces pombe.</title>
        <authorList>
            <person name="Nakase M."/>
            <person name="Tani M."/>
            <person name="Morita T."/>
            <person name="Kitamoto H.K."/>
            <person name="Kashiwazaki J."/>
            <person name="Nakamura T."/>
            <person name="Hosomi A."/>
            <person name="Tanaka N."/>
            <person name="Takegawa K."/>
        </authorList>
    </citation>
    <scope>SUBCELLULAR LOCATION</scope>
    <scope>FUNCTION</scope>
</reference>
<gene>
    <name type="ORF">SPCC4F11.04c</name>
</gene>
<accession>Q9UT67</accession>
<proteinExistence type="inferred from homology"/>
<feature type="chain" id="PRO_0000372336" description="Inositol phosphoceramide mannosyltransferase 2">
    <location>
        <begin position="1"/>
        <end position="345"/>
    </location>
</feature>
<feature type="transmembrane region" description="Helical" evidence="1">
    <location>
        <begin position="4"/>
        <end position="24"/>
    </location>
</feature>
<feature type="transmembrane region" description="Helical" evidence="1">
    <location>
        <begin position="220"/>
        <end position="240"/>
    </location>
</feature>
<feature type="transmembrane region" description="Helical" evidence="1">
    <location>
        <begin position="296"/>
        <end position="316"/>
    </location>
</feature>
<feature type="glycosylation site" description="N-linked (GlcNAc...) asparagine" evidence="1">
    <location>
        <position position="55"/>
    </location>
</feature>
<feature type="glycosylation site" description="N-linked (GlcNAc...) asparagine" evidence="1">
    <location>
        <position position="269"/>
    </location>
</feature>
<dbReference type="EC" id="2.4.-.-"/>
<dbReference type="EMBL" id="CU329672">
    <property type="protein sequence ID" value="CAB55770.1"/>
    <property type="molecule type" value="Genomic_DNA"/>
</dbReference>
<dbReference type="PIR" id="T41355">
    <property type="entry name" value="T41355"/>
</dbReference>
<dbReference type="SMR" id="Q9UT67"/>
<dbReference type="BioGRID" id="275306">
    <property type="interactions" value="2"/>
</dbReference>
<dbReference type="FunCoup" id="Q9UT67">
    <property type="interactions" value="20"/>
</dbReference>
<dbReference type="STRING" id="284812.Q9UT67"/>
<dbReference type="CAZy" id="GT32">
    <property type="family name" value="Glycosyltransferase Family 32"/>
</dbReference>
<dbReference type="iPTMnet" id="Q9UT67"/>
<dbReference type="PaxDb" id="4896-SPCC4F11.04c.1"/>
<dbReference type="EnsemblFungi" id="SPCC4F11.04c.1">
    <property type="protein sequence ID" value="SPCC4F11.04c.1:pep"/>
    <property type="gene ID" value="SPCC4F11.04c"/>
</dbReference>
<dbReference type="KEGG" id="spo:2538722"/>
<dbReference type="PomBase" id="SPCC4F11.04c"/>
<dbReference type="VEuPathDB" id="FungiDB:SPCC4F11.04c"/>
<dbReference type="eggNOG" id="ENOG502QS3D">
    <property type="taxonomic scope" value="Eukaryota"/>
</dbReference>
<dbReference type="HOGENOM" id="CLU_036369_1_0_1"/>
<dbReference type="InParanoid" id="Q9UT67"/>
<dbReference type="OMA" id="HQIFHNW"/>
<dbReference type="PhylomeDB" id="Q9UT67"/>
<dbReference type="PRO" id="PR:Q9UT67"/>
<dbReference type="Proteomes" id="UP000002485">
    <property type="component" value="Chromosome III"/>
</dbReference>
<dbReference type="GO" id="GO:0033106">
    <property type="term" value="C:cis-Golgi network membrane"/>
    <property type="evidence" value="ECO:0000314"/>
    <property type="project" value="PomBase"/>
</dbReference>
<dbReference type="GO" id="GO:0005794">
    <property type="term" value="C:Golgi apparatus"/>
    <property type="evidence" value="ECO:0007005"/>
    <property type="project" value="PomBase"/>
</dbReference>
<dbReference type="GO" id="GO:0031501">
    <property type="term" value="C:mannosyltransferase complex"/>
    <property type="evidence" value="ECO:0000305"/>
    <property type="project" value="PomBase"/>
</dbReference>
<dbReference type="GO" id="GO:0005802">
    <property type="term" value="C:trans-Golgi network"/>
    <property type="evidence" value="ECO:0000314"/>
    <property type="project" value="PomBase"/>
</dbReference>
<dbReference type="GO" id="GO:0032588">
    <property type="term" value="C:trans-Golgi network membrane"/>
    <property type="evidence" value="ECO:0000314"/>
    <property type="project" value="PomBase"/>
</dbReference>
<dbReference type="GO" id="GO:0000030">
    <property type="term" value="F:mannosyltransferase activity"/>
    <property type="evidence" value="ECO:0000318"/>
    <property type="project" value="GO_Central"/>
</dbReference>
<dbReference type="GO" id="GO:0051999">
    <property type="term" value="P:mannosyl-inositol phosphorylceramide biosynthetic process"/>
    <property type="evidence" value="ECO:0000315"/>
    <property type="project" value="PomBase"/>
</dbReference>
<dbReference type="FunFam" id="3.90.550.20:FF:000001">
    <property type="entry name" value="MIPC synthase subunit (SurA)"/>
    <property type="match status" value="1"/>
</dbReference>
<dbReference type="Gene3D" id="3.90.550.20">
    <property type="match status" value="1"/>
</dbReference>
<dbReference type="InterPro" id="IPR051706">
    <property type="entry name" value="Glycosyltransferase_domain"/>
</dbReference>
<dbReference type="InterPro" id="IPR007577">
    <property type="entry name" value="GlycoTrfase_DXD_sugar-bd_CS"/>
</dbReference>
<dbReference type="InterPro" id="IPR029044">
    <property type="entry name" value="Nucleotide-diphossugar_trans"/>
</dbReference>
<dbReference type="PANTHER" id="PTHR32385">
    <property type="entry name" value="MANNOSYL PHOSPHORYLINOSITOL CERAMIDE SYNTHASE"/>
    <property type="match status" value="1"/>
</dbReference>
<dbReference type="PANTHER" id="PTHR32385:SF20">
    <property type="entry name" value="MANNOSYL PHOSPHORYLINOSITOL CERAMIDE SYNTHASE CSH1-RELATED"/>
    <property type="match status" value="1"/>
</dbReference>
<dbReference type="Pfam" id="PF04488">
    <property type="entry name" value="Gly_transf_sug"/>
    <property type="match status" value="1"/>
</dbReference>
<dbReference type="SUPFAM" id="SSF53448">
    <property type="entry name" value="Nucleotide-diphospho-sugar transferases"/>
    <property type="match status" value="1"/>
</dbReference>
<sequence>MVKVIYKFAVFAAVNFFLMSSIVLYFNNEFLMFADRCTKDIIPSEELRYLRQVLNDSIPSKDEPLPTLKLDSLNDISGEPVIPKIIHQTWKTTEVPEGWKGAQQSCIDLHPDYEYILWTDEMSRNFIADNYPWFLPYFDAYPFNVQRADVIRYFVLYHYGGNYIDLDDGCRQRLDSLLYYPVWVRRTDPVGVSNDVMGSVPHHPYFELIIQNLEKNAKSYWLPYLTIMLSTGPLSISFLWEKYKRQLPNPPAFYDHIRVLLERDYKFSNDSYFTFYEGSSWHNNDAGIILWANRHLAYVIVAGFCLYFILSYMFFSKLLDSRYVQRFVTSKRKQPTLPLALQEDV</sequence>
<name>IMT2_SCHPO</name>
<keyword id="KW-0325">Glycoprotein</keyword>
<keyword id="KW-0328">Glycosyltransferase</keyword>
<keyword id="KW-0333">Golgi apparatus</keyword>
<keyword id="KW-0472">Membrane</keyword>
<keyword id="KW-1185">Reference proteome</keyword>
<keyword id="KW-0808">Transferase</keyword>
<keyword id="KW-0812">Transmembrane</keyword>
<keyword id="KW-1133">Transmembrane helix</keyword>